<proteinExistence type="inferred from homology"/>
<feature type="chain" id="PRO_1000013167" description="Acyl-[acyl-carrier-protein]--UDP-N-acetylglucosamine O-acyltransferase">
    <location>
        <begin position="1"/>
        <end position="262"/>
    </location>
</feature>
<accession>A6SZN9</accession>
<comment type="function">
    <text evidence="1">Involved in the biosynthesis of lipid A, a phosphorylated glycolipid that anchors the lipopolysaccharide to the outer membrane of the cell.</text>
</comment>
<comment type="catalytic activity">
    <reaction evidence="1">
        <text>a (3R)-hydroxyacyl-[ACP] + UDP-N-acetyl-alpha-D-glucosamine = a UDP-3-O-[(3R)-3-hydroxyacyl]-N-acetyl-alpha-D-glucosamine + holo-[ACP]</text>
        <dbReference type="Rhea" id="RHEA:67812"/>
        <dbReference type="Rhea" id="RHEA-COMP:9685"/>
        <dbReference type="Rhea" id="RHEA-COMP:9945"/>
        <dbReference type="ChEBI" id="CHEBI:57705"/>
        <dbReference type="ChEBI" id="CHEBI:64479"/>
        <dbReference type="ChEBI" id="CHEBI:78827"/>
        <dbReference type="ChEBI" id="CHEBI:173225"/>
        <dbReference type="EC" id="2.3.1.129"/>
    </reaction>
</comment>
<comment type="pathway">
    <text evidence="1">Glycolipid biosynthesis; lipid IV(A) biosynthesis; lipid IV(A) from (3R)-3-hydroxytetradecanoyl-[acyl-carrier-protein] and UDP-N-acetyl-alpha-D-glucosamine: step 1/6.</text>
</comment>
<comment type="subunit">
    <text evidence="1">Homotrimer.</text>
</comment>
<comment type="subcellular location">
    <subcellularLocation>
        <location evidence="1">Cytoplasm</location>
    </subcellularLocation>
</comment>
<comment type="similarity">
    <text evidence="1">Belongs to the transferase hexapeptide repeat family. LpxA subfamily.</text>
</comment>
<protein>
    <recommendedName>
        <fullName evidence="1">Acyl-[acyl-carrier-protein]--UDP-N-acetylglucosamine O-acyltransferase</fullName>
        <shortName evidence="1">UDP-N-acetylglucosamine acyltransferase</shortName>
        <ecNumber evidence="1">2.3.1.129</ecNumber>
    </recommendedName>
</protein>
<dbReference type="EC" id="2.3.1.129" evidence="1"/>
<dbReference type="EMBL" id="CP000269">
    <property type="protein sequence ID" value="ABR88824.1"/>
    <property type="molecule type" value="Genomic_DNA"/>
</dbReference>
<dbReference type="RefSeq" id="WP_012079899.1">
    <property type="nucleotide sequence ID" value="NC_009659.1"/>
</dbReference>
<dbReference type="SMR" id="A6SZN9"/>
<dbReference type="STRING" id="375286.mma_2046"/>
<dbReference type="KEGG" id="mms:mma_2046"/>
<dbReference type="eggNOG" id="COG1043">
    <property type="taxonomic scope" value="Bacteria"/>
</dbReference>
<dbReference type="HOGENOM" id="CLU_061249_0_0_4"/>
<dbReference type="OrthoDB" id="9807278at2"/>
<dbReference type="UniPathway" id="UPA00359">
    <property type="reaction ID" value="UER00477"/>
</dbReference>
<dbReference type="Proteomes" id="UP000006388">
    <property type="component" value="Chromosome"/>
</dbReference>
<dbReference type="GO" id="GO:0005737">
    <property type="term" value="C:cytoplasm"/>
    <property type="evidence" value="ECO:0007669"/>
    <property type="project" value="UniProtKB-SubCell"/>
</dbReference>
<dbReference type="GO" id="GO:0016020">
    <property type="term" value="C:membrane"/>
    <property type="evidence" value="ECO:0007669"/>
    <property type="project" value="GOC"/>
</dbReference>
<dbReference type="GO" id="GO:0008780">
    <property type="term" value="F:acyl-[acyl-carrier-protein]-UDP-N-acetylglucosamine O-acyltransferase activity"/>
    <property type="evidence" value="ECO:0007669"/>
    <property type="project" value="UniProtKB-UniRule"/>
</dbReference>
<dbReference type="GO" id="GO:0009245">
    <property type="term" value="P:lipid A biosynthetic process"/>
    <property type="evidence" value="ECO:0007669"/>
    <property type="project" value="UniProtKB-UniRule"/>
</dbReference>
<dbReference type="CDD" id="cd03351">
    <property type="entry name" value="LbH_UDP-GlcNAc_AT"/>
    <property type="match status" value="1"/>
</dbReference>
<dbReference type="Gene3D" id="2.160.10.10">
    <property type="entry name" value="Hexapeptide repeat proteins"/>
    <property type="match status" value="1"/>
</dbReference>
<dbReference type="Gene3D" id="1.20.1180.10">
    <property type="entry name" value="Udp N-acetylglucosamine O-acyltransferase, C-terminal domain"/>
    <property type="match status" value="1"/>
</dbReference>
<dbReference type="HAMAP" id="MF_00387">
    <property type="entry name" value="LpxA"/>
    <property type="match status" value="1"/>
</dbReference>
<dbReference type="InterPro" id="IPR029098">
    <property type="entry name" value="Acetyltransf_C"/>
</dbReference>
<dbReference type="InterPro" id="IPR037157">
    <property type="entry name" value="Acetyltransf_C_sf"/>
</dbReference>
<dbReference type="InterPro" id="IPR001451">
    <property type="entry name" value="Hexapep"/>
</dbReference>
<dbReference type="InterPro" id="IPR010137">
    <property type="entry name" value="Lipid_A_LpxA"/>
</dbReference>
<dbReference type="InterPro" id="IPR011004">
    <property type="entry name" value="Trimer_LpxA-like_sf"/>
</dbReference>
<dbReference type="NCBIfam" id="TIGR01852">
    <property type="entry name" value="lipid_A_lpxA"/>
    <property type="match status" value="1"/>
</dbReference>
<dbReference type="NCBIfam" id="NF003657">
    <property type="entry name" value="PRK05289.1"/>
    <property type="match status" value="1"/>
</dbReference>
<dbReference type="PANTHER" id="PTHR43480">
    <property type="entry name" value="ACYL-[ACYL-CARRIER-PROTEIN]--UDP-N-ACETYLGLUCOSAMINE O-ACYLTRANSFERASE"/>
    <property type="match status" value="1"/>
</dbReference>
<dbReference type="PANTHER" id="PTHR43480:SF1">
    <property type="entry name" value="ACYL-[ACYL-CARRIER-PROTEIN]--UDP-N-ACETYLGLUCOSAMINE O-ACYLTRANSFERASE, MITOCHONDRIAL-RELATED"/>
    <property type="match status" value="1"/>
</dbReference>
<dbReference type="Pfam" id="PF13720">
    <property type="entry name" value="Acetyltransf_11"/>
    <property type="match status" value="1"/>
</dbReference>
<dbReference type="Pfam" id="PF00132">
    <property type="entry name" value="Hexapep"/>
    <property type="match status" value="2"/>
</dbReference>
<dbReference type="PIRSF" id="PIRSF000456">
    <property type="entry name" value="UDP-GlcNAc_acltr"/>
    <property type="match status" value="1"/>
</dbReference>
<dbReference type="SUPFAM" id="SSF51161">
    <property type="entry name" value="Trimeric LpxA-like enzymes"/>
    <property type="match status" value="1"/>
</dbReference>
<sequence>MSLIHPTAIVDPKAQLDSSVEVGPYTVIGPDVVIGAGSKIGPHVVVEGHTTIGADNKIFQFASIGAAPQDKKYAGEPTLLTIGDRNTIREFVTINLGTSQDVGITRLGNDNWIMAYVHIAHDCQLGSNIILANNATLAGHVHLEDWVFLGGFTSVHQFCRIGAHAMTAFTAAVSQDIPPFVTAAGNRAVPAGINSEGLKRRGFSSEQIMAIKRGYKTIYRSGLPLEEAKLALQAEEEKSPDAAQYLRQLREFIEASPRGIIR</sequence>
<gene>
    <name evidence="1" type="primary">lpxA</name>
    <name type="ordered locus">mma_2046</name>
</gene>
<evidence type="ECO:0000255" key="1">
    <source>
        <dbReference type="HAMAP-Rule" id="MF_00387"/>
    </source>
</evidence>
<keyword id="KW-0012">Acyltransferase</keyword>
<keyword id="KW-0963">Cytoplasm</keyword>
<keyword id="KW-0441">Lipid A biosynthesis</keyword>
<keyword id="KW-0444">Lipid biosynthesis</keyword>
<keyword id="KW-0443">Lipid metabolism</keyword>
<keyword id="KW-0677">Repeat</keyword>
<keyword id="KW-0808">Transferase</keyword>
<name>LPXA_JANMA</name>
<organism>
    <name type="scientific">Janthinobacterium sp. (strain Marseille)</name>
    <name type="common">Minibacterium massiliensis</name>
    <dbReference type="NCBI Taxonomy" id="375286"/>
    <lineage>
        <taxon>Bacteria</taxon>
        <taxon>Pseudomonadati</taxon>
        <taxon>Pseudomonadota</taxon>
        <taxon>Betaproteobacteria</taxon>
        <taxon>Burkholderiales</taxon>
        <taxon>Oxalobacteraceae</taxon>
        <taxon>Janthinobacterium</taxon>
    </lineage>
</organism>
<reference key="1">
    <citation type="journal article" date="2007" name="PLoS Genet.">
        <title>Genome analysis of Minibacterium massiliensis highlights the convergent evolution of water-living bacteria.</title>
        <authorList>
            <person name="Audic S."/>
            <person name="Robert C."/>
            <person name="Campagna B."/>
            <person name="Parinello H."/>
            <person name="Claverie J.-M."/>
            <person name="Raoult D."/>
            <person name="Drancourt M."/>
        </authorList>
    </citation>
    <scope>NUCLEOTIDE SEQUENCE [LARGE SCALE GENOMIC DNA]</scope>
    <source>
        <strain>Marseille</strain>
    </source>
</reference>